<comment type="function">
    <text evidence="1">One of the essential components for the initiation of protein synthesis. Stabilizes the binding of IF-2 and IF-3 on the 30S subunit to which N-formylmethionyl-tRNA(fMet) subsequently binds. Helps modulate mRNA selection, yielding the 30S pre-initiation complex (PIC). Upon addition of the 50S ribosomal subunit IF-1, IF-2 and IF-3 are released leaving the mature 70S translation initiation complex.</text>
</comment>
<comment type="subunit">
    <text evidence="1">Component of the 30S ribosomal translation pre-initiation complex which assembles on the 30S ribosome in the order IF-2 and IF-3, IF-1 and N-formylmethionyl-tRNA(fMet); mRNA recruitment can occur at any time during PIC assembly.</text>
</comment>
<comment type="subcellular location">
    <subcellularLocation>
        <location evidence="1">Cytoplasm</location>
    </subcellularLocation>
</comment>
<comment type="similarity">
    <text evidence="1">Belongs to the IF-1 family.</text>
</comment>
<organism>
    <name type="scientific">Flavobacterium johnsoniae (strain ATCC 17061 / DSM 2064 / JCM 8514 / BCRC 14874 / CCUG 350202 / NBRC 14942 / NCIMB 11054 / UW101)</name>
    <name type="common">Cytophaga johnsonae</name>
    <dbReference type="NCBI Taxonomy" id="376686"/>
    <lineage>
        <taxon>Bacteria</taxon>
        <taxon>Pseudomonadati</taxon>
        <taxon>Bacteroidota</taxon>
        <taxon>Flavobacteriia</taxon>
        <taxon>Flavobacteriales</taxon>
        <taxon>Flavobacteriaceae</taxon>
        <taxon>Flavobacterium</taxon>
    </lineage>
</organism>
<protein>
    <recommendedName>
        <fullName evidence="1">Translation initiation factor IF-1</fullName>
    </recommendedName>
</protein>
<proteinExistence type="inferred from homology"/>
<feature type="chain" id="PRO_0000338825" description="Translation initiation factor IF-1">
    <location>
        <begin position="1"/>
        <end position="71"/>
    </location>
</feature>
<feature type="domain" description="S1-like" evidence="1">
    <location>
        <begin position="1"/>
        <end position="71"/>
    </location>
</feature>
<evidence type="ECO:0000255" key="1">
    <source>
        <dbReference type="HAMAP-Rule" id="MF_00075"/>
    </source>
</evidence>
<dbReference type="EMBL" id="CP000685">
    <property type="protein sequence ID" value="ABQ03412.1"/>
    <property type="molecule type" value="Genomic_DNA"/>
</dbReference>
<dbReference type="RefSeq" id="WP_007136545.1">
    <property type="nucleotide sequence ID" value="NZ_MUGZ01000005.1"/>
</dbReference>
<dbReference type="SMR" id="A5FN00"/>
<dbReference type="STRING" id="376686.Fjoh_0376"/>
<dbReference type="KEGG" id="fjo:Fjoh_0376"/>
<dbReference type="eggNOG" id="COG0361">
    <property type="taxonomic scope" value="Bacteria"/>
</dbReference>
<dbReference type="HOGENOM" id="CLU_151267_1_0_10"/>
<dbReference type="OrthoDB" id="9803250at2"/>
<dbReference type="Proteomes" id="UP000006694">
    <property type="component" value="Chromosome"/>
</dbReference>
<dbReference type="GO" id="GO:0005829">
    <property type="term" value="C:cytosol"/>
    <property type="evidence" value="ECO:0007669"/>
    <property type="project" value="TreeGrafter"/>
</dbReference>
<dbReference type="GO" id="GO:0043022">
    <property type="term" value="F:ribosome binding"/>
    <property type="evidence" value="ECO:0007669"/>
    <property type="project" value="UniProtKB-UniRule"/>
</dbReference>
<dbReference type="GO" id="GO:0019843">
    <property type="term" value="F:rRNA binding"/>
    <property type="evidence" value="ECO:0007669"/>
    <property type="project" value="UniProtKB-UniRule"/>
</dbReference>
<dbReference type="GO" id="GO:0003743">
    <property type="term" value="F:translation initiation factor activity"/>
    <property type="evidence" value="ECO:0007669"/>
    <property type="project" value="UniProtKB-UniRule"/>
</dbReference>
<dbReference type="CDD" id="cd04451">
    <property type="entry name" value="S1_IF1"/>
    <property type="match status" value="1"/>
</dbReference>
<dbReference type="FunFam" id="2.40.50.140:FF:000002">
    <property type="entry name" value="Translation initiation factor IF-1"/>
    <property type="match status" value="1"/>
</dbReference>
<dbReference type="Gene3D" id="2.40.50.140">
    <property type="entry name" value="Nucleic acid-binding proteins"/>
    <property type="match status" value="1"/>
</dbReference>
<dbReference type="HAMAP" id="MF_00075">
    <property type="entry name" value="IF_1"/>
    <property type="match status" value="1"/>
</dbReference>
<dbReference type="InterPro" id="IPR012340">
    <property type="entry name" value="NA-bd_OB-fold"/>
</dbReference>
<dbReference type="InterPro" id="IPR006196">
    <property type="entry name" value="RNA-binding_domain_S1_IF1"/>
</dbReference>
<dbReference type="InterPro" id="IPR004368">
    <property type="entry name" value="TIF_IF1"/>
</dbReference>
<dbReference type="NCBIfam" id="TIGR00008">
    <property type="entry name" value="infA"/>
    <property type="match status" value="1"/>
</dbReference>
<dbReference type="PANTHER" id="PTHR33370">
    <property type="entry name" value="TRANSLATION INITIATION FACTOR IF-1, CHLOROPLASTIC"/>
    <property type="match status" value="1"/>
</dbReference>
<dbReference type="PANTHER" id="PTHR33370:SF1">
    <property type="entry name" value="TRANSLATION INITIATION FACTOR IF-1, CHLOROPLASTIC"/>
    <property type="match status" value="1"/>
</dbReference>
<dbReference type="Pfam" id="PF01176">
    <property type="entry name" value="eIF-1a"/>
    <property type="match status" value="1"/>
</dbReference>
<dbReference type="SUPFAM" id="SSF50249">
    <property type="entry name" value="Nucleic acid-binding proteins"/>
    <property type="match status" value="1"/>
</dbReference>
<dbReference type="PROSITE" id="PS50832">
    <property type="entry name" value="S1_IF1_TYPE"/>
    <property type="match status" value="1"/>
</dbReference>
<gene>
    <name evidence="1" type="primary">infA</name>
    <name type="ordered locus">Fjoh_0376</name>
</gene>
<sequence length="71" mass="8109">MAKQSAIEQDGSIIEALSNAMFRVELENGHIVIAHISGKMRMHYIKLLPGDKVKLEMSPYDLSKARITYRY</sequence>
<accession>A5FN00</accession>
<keyword id="KW-0963">Cytoplasm</keyword>
<keyword id="KW-0396">Initiation factor</keyword>
<keyword id="KW-0648">Protein biosynthesis</keyword>
<keyword id="KW-0694">RNA-binding</keyword>
<keyword id="KW-0699">rRNA-binding</keyword>
<name>IF1_FLAJ1</name>
<reference key="1">
    <citation type="journal article" date="2009" name="Appl. Environ. Microbiol.">
        <title>Novel features of the polysaccharide-digesting gliding bacterium Flavobacterium johnsoniae as revealed by genome sequence analysis.</title>
        <authorList>
            <person name="McBride M.J."/>
            <person name="Xie G."/>
            <person name="Martens E.C."/>
            <person name="Lapidus A."/>
            <person name="Henrissat B."/>
            <person name="Rhodes R.G."/>
            <person name="Goltsman E."/>
            <person name="Wang W."/>
            <person name="Xu J."/>
            <person name="Hunnicutt D.W."/>
            <person name="Staroscik A.M."/>
            <person name="Hoover T.R."/>
            <person name="Cheng Y.Q."/>
            <person name="Stein J.L."/>
        </authorList>
    </citation>
    <scope>NUCLEOTIDE SEQUENCE [LARGE SCALE GENOMIC DNA]</scope>
    <source>
        <strain>ATCC 17061 / DSM 2064 / JCM 8514 / BCRC 14874 / CCUG 350202 / NBRC 14942 / NCIMB 11054 / UW101</strain>
    </source>
</reference>